<proteinExistence type="inferred from homology"/>
<reference key="1">
    <citation type="journal article" date="2016" name="Genome Announc.">
        <title>Complete genome sequence of Alkaliphilus metalliredigens strain QYMF, an alkaliphilic and metal-reducing bacterium isolated from borax-contaminated leachate ponds.</title>
        <authorList>
            <person name="Hwang C."/>
            <person name="Copeland A."/>
            <person name="Lucas S."/>
            <person name="Lapidus A."/>
            <person name="Barry K."/>
            <person name="Detter J.C."/>
            <person name="Glavina Del Rio T."/>
            <person name="Hammon N."/>
            <person name="Israni S."/>
            <person name="Dalin E."/>
            <person name="Tice H."/>
            <person name="Pitluck S."/>
            <person name="Chertkov O."/>
            <person name="Brettin T."/>
            <person name="Bruce D."/>
            <person name="Han C."/>
            <person name="Schmutz J."/>
            <person name="Larimer F."/>
            <person name="Land M.L."/>
            <person name="Hauser L."/>
            <person name="Kyrpides N."/>
            <person name="Mikhailova N."/>
            <person name="Ye Q."/>
            <person name="Zhou J."/>
            <person name="Richardson P."/>
            <person name="Fields M.W."/>
        </authorList>
    </citation>
    <scope>NUCLEOTIDE SEQUENCE [LARGE SCALE GENOMIC DNA]</scope>
    <source>
        <strain>QYMF</strain>
    </source>
</reference>
<evidence type="ECO:0000255" key="1">
    <source>
        <dbReference type="HAMAP-Rule" id="MF_01515"/>
    </source>
</evidence>
<accession>A6TLV6</accession>
<sequence length="173" mass="19083">MELVLGYLFIFVARVTDVGMGTVRMIMVVKGKRIQAAAIGFVESIIYILAIGKVLEALDNPVNILVYATGFAAGNYVGIYIEERMALGNIIAQVMCDHNVMQLVDLLRDAGFGVTVVEGYGRTGIRHLLNVSLQRKNLSKLYNVLDTHDHKAFITVTDARSIRGGYFTSVKKK</sequence>
<keyword id="KW-1003">Cell membrane</keyword>
<keyword id="KW-0472">Membrane</keyword>
<keyword id="KW-1185">Reference proteome</keyword>
<keyword id="KW-0812">Transmembrane</keyword>
<keyword id="KW-1133">Transmembrane helix</keyword>
<name>Y954_ALKMQ</name>
<dbReference type="EMBL" id="CP000724">
    <property type="protein sequence ID" value="ABR47174.1"/>
    <property type="molecule type" value="Genomic_DNA"/>
</dbReference>
<dbReference type="RefSeq" id="WP_012062216.1">
    <property type="nucleotide sequence ID" value="NC_009633.1"/>
</dbReference>
<dbReference type="SMR" id="A6TLV6"/>
<dbReference type="STRING" id="293826.Amet_0954"/>
<dbReference type="KEGG" id="amt:Amet_0954"/>
<dbReference type="eggNOG" id="COG4843">
    <property type="taxonomic scope" value="Bacteria"/>
</dbReference>
<dbReference type="HOGENOM" id="CLU_106166_0_0_9"/>
<dbReference type="OrthoDB" id="48231at2"/>
<dbReference type="Proteomes" id="UP000001572">
    <property type="component" value="Chromosome"/>
</dbReference>
<dbReference type="GO" id="GO:0005886">
    <property type="term" value="C:plasma membrane"/>
    <property type="evidence" value="ECO:0007669"/>
    <property type="project" value="UniProtKB-SubCell"/>
</dbReference>
<dbReference type="CDD" id="cd16381">
    <property type="entry name" value="YitT_C_like_1"/>
    <property type="match status" value="1"/>
</dbReference>
<dbReference type="HAMAP" id="MF_01515">
    <property type="entry name" value="UPF0316"/>
    <property type="match status" value="1"/>
</dbReference>
<dbReference type="InterPro" id="IPR019264">
    <property type="entry name" value="DUF2179"/>
</dbReference>
<dbReference type="InterPro" id="IPR044035">
    <property type="entry name" value="DUF5698"/>
</dbReference>
<dbReference type="InterPro" id="IPR022930">
    <property type="entry name" value="UPF0316"/>
</dbReference>
<dbReference type="NCBIfam" id="NF003194">
    <property type="entry name" value="PRK04164.1-5"/>
    <property type="match status" value="1"/>
</dbReference>
<dbReference type="PANTHER" id="PTHR40060">
    <property type="entry name" value="UPF0316 PROTEIN YEBE"/>
    <property type="match status" value="1"/>
</dbReference>
<dbReference type="PANTHER" id="PTHR40060:SF1">
    <property type="entry name" value="UPF0316 PROTEIN YEBE"/>
    <property type="match status" value="1"/>
</dbReference>
<dbReference type="Pfam" id="PF10035">
    <property type="entry name" value="DUF2179"/>
    <property type="match status" value="1"/>
</dbReference>
<dbReference type="Pfam" id="PF18955">
    <property type="entry name" value="DUF5698"/>
    <property type="match status" value="1"/>
</dbReference>
<gene>
    <name type="ordered locus">Amet_0954</name>
</gene>
<feature type="chain" id="PRO_0000318543" description="UPF0316 protein Amet_0954">
    <location>
        <begin position="1"/>
        <end position="173"/>
    </location>
</feature>
<feature type="transmembrane region" description="Helical" evidence="1">
    <location>
        <begin position="3"/>
        <end position="23"/>
    </location>
</feature>
<feature type="transmembrane region" description="Helical" evidence="1">
    <location>
        <begin position="38"/>
        <end position="58"/>
    </location>
</feature>
<feature type="transmembrane region" description="Helical" evidence="1">
    <location>
        <begin position="61"/>
        <end position="81"/>
    </location>
</feature>
<comment type="subcellular location">
    <subcellularLocation>
        <location evidence="1">Cell membrane</location>
        <topology evidence="1">Multi-pass membrane protein</topology>
    </subcellularLocation>
</comment>
<comment type="similarity">
    <text evidence="1">Belongs to the UPF0316 family.</text>
</comment>
<protein>
    <recommendedName>
        <fullName evidence="1">UPF0316 protein Amet_0954</fullName>
    </recommendedName>
</protein>
<organism>
    <name type="scientific">Alkaliphilus metalliredigens (strain QYMF)</name>
    <dbReference type="NCBI Taxonomy" id="293826"/>
    <lineage>
        <taxon>Bacteria</taxon>
        <taxon>Bacillati</taxon>
        <taxon>Bacillota</taxon>
        <taxon>Clostridia</taxon>
        <taxon>Peptostreptococcales</taxon>
        <taxon>Natronincolaceae</taxon>
        <taxon>Alkaliphilus</taxon>
    </lineage>
</organism>